<accession>Q8RUV9</accession>
<accession>B7F4V2</accession>
<organism>
    <name type="scientific">Oryza sativa subsp. japonica</name>
    <name type="common">Rice</name>
    <dbReference type="NCBI Taxonomy" id="39947"/>
    <lineage>
        <taxon>Eukaryota</taxon>
        <taxon>Viridiplantae</taxon>
        <taxon>Streptophyta</taxon>
        <taxon>Embryophyta</taxon>
        <taxon>Tracheophyta</taxon>
        <taxon>Spermatophyta</taxon>
        <taxon>Magnoliopsida</taxon>
        <taxon>Liliopsida</taxon>
        <taxon>Poales</taxon>
        <taxon>Poaceae</taxon>
        <taxon>BOP clade</taxon>
        <taxon>Oryzoideae</taxon>
        <taxon>Oryzeae</taxon>
        <taxon>Oryzinae</taxon>
        <taxon>Oryza</taxon>
        <taxon>Oryza sativa</taxon>
    </lineage>
</organism>
<sequence length="827" mass="91711">MMGRRGSSWCRWWVALLVLAVAADAVGCTSVSYDDRSLVIDGQRRIILSGSIHYPRSTPEMWPDLIKKAKEGGLDAIETYIFWNGHEPHRRQYNFEGNYDVVRFFKEIQNAGMYAILRIGPYICGEWNYGGLPAWLRDIPGMQFRLHNEPFENEMETFTTLIVNKMKDSKMFAEQGGPIILAQIENEYGNIMGKLNNNQSASEYIHWCADMANKQNVGVPWIMCQQDDDVPHNVVNTCNGFYCHDWFPNRTGIPKIWTENWTGWFKAWDKPDFHRSAEDIAFAVAMFFQKRGSLQNYYMYHGGTNFGRTSGGPYITTSYDYDAPLDEYGNLRQPKYGHLKELHSVLKSMEKTLVHGEYFDTNYGDNITVTKYTLDSSSACFINNRFDDKDVNVTLDGATHLLPAWSVSILPDCKTVAFNSAKIKTQTSVMVKKPNTAEQEQESLKWSWMPENLSPFMTDEKGNFRKNELLEQIVTSTDQSDYLWYRTSLNHKGEGSYKLYVNTTGHELYAFVNGKLIGKNHSADGDFVFQLESPVKLHDGKNYISLLSATVGLKNYGPSFEKMPTGIVGGPVKLIDSNGTAIDLSNSSWSYKAGLASEYRQIHLDKPGYKWNGNNGTIPINRPFTWYKATFEAPSGEDAVVVDLLGLNKGVAWVNGNNLGRYWPSYTAAEMAGCHRCDYRGAFQAEGDGTRCLTGCGEPSQRYYHVPRSFLAAGEPNTLLLFEEAGGDPSGVALRTVVPGAVCTSGEAGDAVTLSCGGGHAVSSVDVASFGVGRGRCGGYEGGCESKAAYEAFTAACVGKESCTVEITGAFAGAGCLSGVLTVQATC</sequence>
<gene>
    <name type="ordered locus">Os01g0533400</name>
    <name type="ordered locus">LOC_Os01g34920</name>
    <name type="ORF">OJ1029_F04.5</name>
    <name type="ORF">OJ1619_F12.26</name>
</gene>
<protein>
    <recommendedName>
        <fullName>Beta-galactosidase 1</fullName>
        <shortName>Lactase 1</shortName>
        <ecNumber>3.2.1.23</ecNumber>
    </recommendedName>
</protein>
<evidence type="ECO:0000255" key="1"/>
<evidence type="ECO:0000255" key="2">
    <source>
        <dbReference type="PROSITE-ProRule" id="PRU00260"/>
    </source>
</evidence>
<evidence type="ECO:0000305" key="3"/>
<feature type="signal peptide" evidence="1">
    <location>
        <begin position="1"/>
        <end position="25"/>
    </location>
</feature>
<feature type="chain" id="PRO_0000294152" description="Beta-galactosidase 1">
    <location>
        <begin position="26"/>
        <end position="827"/>
    </location>
</feature>
<feature type="domain" description="SUEL-type lectin" evidence="2">
    <location>
        <begin position="746"/>
        <end position="827"/>
    </location>
</feature>
<feature type="active site" description="Proton donor" evidence="1">
    <location>
        <position position="187"/>
    </location>
</feature>
<feature type="active site" description="Nucleophile" evidence="1">
    <location>
        <position position="259"/>
    </location>
</feature>
<feature type="glycosylation site" description="N-linked (GlcNAc...) asparagine" evidence="1">
    <location>
        <position position="198"/>
    </location>
</feature>
<feature type="glycosylation site" description="N-linked (GlcNAc...) asparagine" evidence="1">
    <location>
        <position position="249"/>
    </location>
</feature>
<feature type="glycosylation site" description="N-linked (GlcNAc...) asparagine" evidence="1">
    <location>
        <position position="260"/>
    </location>
</feature>
<feature type="glycosylation site" description="N-linked (GlcNAc...) asparagine" evidence="1">
    <location>
        <position position="366"/>
    </location>
</feature>
<feature type="glycosylation site" description="N-linked (GlcNAc...) asparagine" evidence="1">
    <location>
        <position position="392"/>
    </location>
</feature>
<feature type="glycosylation site" description="N-linked (GlcNAc...) asparagine" evidence="1">
    <location>
        <position position="502"/>
    </location>
</feature>
<feature type="glycosylation site" description="N-linked (GlcNAc...) asparagine" evidence="1">
    <location>
        <position position="520"/>
    </location>
</feature>
<feature type="glycosylation site" description="N-linked (GlcNAc...) asparagine" evidence="1">
    <location>
        <position position="578"/>
    </location>
</feature>
<feature type="glycosylation site" description="N-linked (GlcNAc...) asparagine" evidence="1">
    <location>
        <position position="586"/>
    </location>
</feature>
<feature type="glycosylation site" description="N-linked (GlcNAc...) asparagine" evidence="1">
    <location>
        <position position="615"/>
    </location>
</feature>
<keyword id="KW-0052">Apoplast</keyword>
<keyword id="KW-0325">Glycoprotein</keyword>
<keyword id="KW-0326">Glycosidase</keyword>
<keyword id="KW-0378">Hydrolase</keyword>
<keyword id="KW-1185">Reference proteome</keyword>
<keyword id="KW-0964">Secreted</keyword>
<keyword id="KW-0732">Signal</keyword>
<comment type="catalytic activity">
    <reaction>
        <text>Hydrolysis of terminal non-reducing beta-D-galactose residues in beta-D-galactosides.</text>
        <dbReference type="EC" id="3.2.1.23"/>
    </reaction>
</comment>
<comment type="subcellular location">
    <subcellularLocation>
        <location evidence="3">Secreted</location>
        <location evidence="3">Extracellular space</location>
        <location evidence="3">Apoplast</location>
    </subcellularLocation>
</comment>
<comment type="similarity">
    <text evidence="3">Belongs to the glycosyl hydrolase 35 family.</text>
</comment>
<proteinExistence type="evidence at transcript level"/>
<name>BGAL1_ORYSJ</name>
<dbReference type="EC" id="3.2.1.23"/>
<dbReference type="EMBL" id="AP003445">
    <property type="protein sequence ID" value="BAB89138.1"/>
    <property type="molecule type" value="Genomic_DNA"/>
</dbReference>
<dbReference type="EMBL" id="AP003447">
    <property type="protein sequence ID" value="BAB90329.1"/>
    <property type="molecule type" value="Genomic_DNA"/>
</dbReference>
<dbReference type="EMBL" id="AP008207">
    <property type="protein sequence ID" value="BAF05166.1"/>
    <property type="molecule type" value="Genomic_DNA"/>
</dbReference>
<dbReference type="EMBL" id="AP014957">
    <property type="protein sequence ID" value="BAS72526.1"/>
    <property type="molecule type" value="Genomic_DNA"/>
</dbReference>
<dbReference type="EMBL" id="AK119447">
    <property type="protein sequence ID" value="BAG99649.1"/>
    <property type="molecule type" value="mRNA"/>
</dbReference>
<dbReference type="RefSeq" id="XP_015621617.1">
    <property type="nucleotide sequence ID" value="XM_015766131.1"/>
</dbReference>
<dbReference type="SMR" id="Q8RUV9"/>
<dbReference type="FunCoup" id="Q8RUV9">
    <property type="interactions" value="2"/>
</dbReference>
<dbReference type="STRING" id="39947.Q8RUV9"/>
<dbReference type="CAZy" id="GH35">
    <property type="family name" value="Glycoside Hydrolase Family 35"/>
</dbReference>
<dbReference type="PaxDb" id="39947-Q8RUV9"/>
<dbReference type="EnsemblPlants" id="Os01t0533400-01">
    <property type="protein sequence ID" value="Os01t0533400-01"/>
    <property type="gene ID" value="Os01g0533400"/>
</dbReference>
<dbReference type="Gramene" id="Os01t0533400-01">
    <property type="protein sequence ID" value="Os01t0533400-01"/>
    <property type="gene ID" value="Os01g0533400"/>
</dbReference>
<dbReference type="KEGG" id="dosa:Os01g0533400"/>
<dbReference type="eggNOG" id="KOG0496">
    <property type="taxonomic scope" value="Eukaryota"/>
</dbReference>
<dbReference type="HOGENOM" id="CLU_007853_4_0_1"/>
<dbReference type="InParanoid" id="Q8RUV9"/>
<dbReference type="OMA" id="ACVGRES"/>
<dbReference type="OrthoDB" id="724889at2759"/>
<dbReference type="Proteomes" id="UP000000763">
    <property type="component" value="Chromosome 1"/>
</dbReference>
<dbReference type="Proteomes" id="UP000059680">
    <property type="component" value="Chromosome 1"/>
</dbReference>
<dbReference type="GO" id="GO:0048046">
    <property type="term" value="C:apoplast"/>
    <property type="evidence" value="ECO:0007669"/>
    <property type="project" value="UniProtKB-SubCell"/>
</dbReference>
<dbReference type="GO" id="GO:0009505">
    <property type="term" value="C:plant-type cell wall"/>
    <property type="evidence" value="ECO:0000318"/>
    <property type="project" value="GO_Central"/>
</dbReference>
<dbReference type="GO" id="GO:0005773">
    <property type="term" value="C:vacuole"/>
    <property type="evidence" value="ECO:0000318"/>
    <property type="project" value="GO_Central"/>
</dbReference>
<dbReference type="GO" id="GO:0004565">
    <property type="term" value="F:beta-galactosidase activity"/>
    <property type="evidence" value="ECO:0000318"/>
    <property type="project" value="GO_Central"/>
</dbReference>
<dbReference type="GO" id="GO:0030246">
    <property type="term" value="F:carbohydrate binding"/>
    <property type="evidence" value="ECO:0007669"/>
    <property type="project" value="InterPro"/>
</dbReference>
<dbReference type="GO" id="GO:0019388">
    <property type="term" value="P:galactose catabolic process"/>
    <property type="evidence" value="ECO:0000318"/>
    <property type="project" value="GO_Central"/>
</dbReference>
<dbReference type="GO" id="GO:0009827">
    <property type="term" value="P:plant-type cell wall modification"/>
    <property type="evidence" value="ECO:0000318"/>
    <property type="project" value="GO_Central"/>
</dbReference>
<dbReference type="CDD" id="cd22842">
    <property type="entry name" value="Gal_Rha_Lectin_BGal"/>
    <property type="match status" value="1"/>
</dbReference>
<dbReference type="FunFam" id="2.60.120.260:FF:000109">
    <property type="entry name" value="Beta-galactosidase"/>
    <property type="match status" value="1"/>
</dbReference>
<dbReference type="FunFam" id="2.60.120.260:FF:000142">
    <property type="entry name" value="Beta-galactosidase"/>
    <property type="match status" value="1"/>
</dbReference>
<dbReference type="FunFam" id="2.60.120.260:FF:000151">
    <property type="entry name" value="Beta-galactosidase"/>
    <property type="match status" value="1"/>
</dbReference>
<dbReference type="FunFam" id="3.20.20.80:FF:000006">
    <property type="entry name" value="Beta-galactosidase"/>
    <property type="match status" value="1"/>
</dbReference>
<dbReference type="Gene3D" id="2.60.120.260">
    <property type="entry name" value="Galactose-binding domain-like"/>
    <property type="match status" value="2"/>
</dbReference>
<dbReference type="Gene3D" id="3.20.20.80">
    <property type="entry name" value="Glycosidases"/>
    <property type="match status" value="1"/>
</dbReference>
<dbReference type="InterPro" id="IPR048913">
    <property type="entry name" value="BetaGal_gal-bd"/>
</dbReference>
<dbReference type="InterPro" id="IPR008979">
    <property type="entry name" value="Galactose-bd-like_sf"/>
</dbReference>
<dbReference type="InterPro" id="IPR041392">
    <property type="entry name" value="GHD"/>
</dbReference>
<dbReference type="InterPro" id="IPR031330">
    <property type="entry name" value="Gly_Hdrlase_35_cat"/>
</dbReference>
<dbReference type="InterPro" id="IPR019801">
    <property type="entry name" value="Glyco_hydro_35_CS"/>
</dbReference>
<dbReference type="InterPro" id="IPR001944">
    <property type="entry name" value="Glycoside_Hdrlase_35"/>
</dbReference>
<dbReference type="InterPro" id="IPR017853">
    <property type="entry name" value="Glycoside_hydrolase_SF"/>
</dbReference>
<dbReference type="InterPro" id="IPR000922">
    <property type="entry name" value="Lectin_gal-bd_dom"/>
</dbReference>
<dbReference type="PANTHER" id="PTHR23421">
    <property type="entry name" value="BETA-GALACTOSIDASE RELATED"/>
    <property type="match status" value="1"/>
</dbReference>
<dbReference type="Pfam" id="PF21467">
    <property type="entry name" value="BetaGal_gal-bd"/>
    <property type="match status" value="1"/>
</dbReference>
<dbReference type="Pfam" id="PF17834">
    <property type="entry name" value="GHD"/>
    <property type="match status" value="1"/>
</dbReference>
<dbReference type="Pfam" id="PF01301">
    <property type="entry name" value="Glyco_hydro_35"/>
    <property type="match status" value="1"/>
</dbReference>
<dbReference type="Pfam" id="PF02140">
    <property type="entry name" value="SUEL_Lectin"/>
    <property type="match status" value="1"/>
</dbReference>
<dbReference type="PRINTS" id="PR00742">
    <property type="entry name" value="GLHYDRLASE35"/>
</dbReference>
<dbReference type="SUPFAM" id="SSF51445">
    <property type="entry name" value="(Trans)glycosidases"/>
    <property type="match status" value="1"/>
</dbReference>
<dbReference type="SUPFAM" id="SSF49785">
    <property type="entry name" value="Galactose-binding domain-like"/>
    <property type="match status" value="2"/>
</dbReference>
<dbReference type="PROSITE" id="PS01182">
    <property type="entry name" value="GLYCOSYL_HYDROL_F35"/>
    <property type="match status" value="1"/>
</dbReference>
<dbReference type="PROSITE" id="PS50228">
    <property type="entry name" value="SUEL_LECTIN"/>
    <property type="match status" value="1"/>
</dbReference>
<reference key="1">
    <citation type="journal article" date="2002" name="Nature">
        <title>The genome sequence and structure of rice chromosome 1.</title>
        <authorList>
            <person name="Sasaki T."/>
            <person name="Matsumoto T."/>
            <person name="Yamamoto K."/>
            <person name="Sakata K."/>
            <person name="Baba T."/>
            <person name="Katayose Y."/>
            <person name="Wu J."/>
            <person name="Niimura Y."/>
            <person name="Cheng Z."/>
            <person name="Nagamura Y."/>
            <person name="Antonio B.A."/>
            <person name="Kanamori H."/>
            <person name="Hosokawa S."/>
            <person name="Masukawa M."/>
            <person name="Arikawa K."/>
            <person name="Chiden Y."/>
            <person name="Hayashi M."/>
            <person name="Okamoto M."/>
            <person name="Ando T."/>
            <person name="Aoki H."/>
            <person name="Arita K."/>
            <person name="Hamada M."/>
            <person name="Harada C."/>
            <person name="Hijishita S."/>
            <person name="Honda M."/>
            <person name="Ichikawa Y."/>
            <person name="Idonuma A."/>
            <person name="Iijima M."/>
            <person name="Ikeda M."/>
            <person name="Ikeno M."/>
            <person name="Ito S."/>
            <person name="Ito T."/>
            <person name="Ito Y."/>
            <person name="Ito Y."/>
            <person name="Iwabuchi A."/>
            <person name="Kamiya K."/>
            <person name="Karasawa W."/>
            <person name="Katagiri S."/>
            <person name="Kikuta A."/>
            <person name="Kobayashi N."/>
            <person name="Kono I."/>
            <person name="Machita K."/>
            <person name="Maehara T."/>
            <person name="Mizuno H."/>
            <person name="Mizubayashi T."/>
            <person name="Mukai Y."/>
            <person name="Nagasaki H."/>
            <person name="Nakashima M."/>
            <person name="Nakama Y."/>
            <person name="Nakamichi Y."/>
            <person name="Nakamura M."/>
            <person name="Namiki N."/>
            <person name="Negishi M."/>
            <person name="Ohta I."/>
            <person name="Ono N."/>
            <person name="Saji S."/>
            <person name="Sakai K."/>
            <person name="Shibata M."/>
            <person name="Shimokawa T."/>
            <person name="Shomura A."/>
            <person name="Song J."/>
            <person name="Takazaki Y."/>
            <person name="Terasawa K."/>
            <person name="Tsuji K."/>
            <person name="Waki K."/>
            <person name="Yamagata H."/>
            <person name="Yamane H."/>
            <person name="Yoshiki S."/>
            <person name="Yoshihara R."/>
            <person name="Yukawa K."/>
            <person name="Zhong H."/>
            <person name="Iwama H."/>
            <person name="Endo T."/>
            <person name="Ito H."/>
            <person name="Hahn J.H."/>
            <person name="Kim H.-I."/>
            <person name="Eun M.-Y."/>
            <person name="Yano M."/>
            <person name="Jiang J."/>
            <person name="Gojobori T."/>
        </authorList>
    </citation>
    <scope>NUCLEOTIDE SEQUENCE [LARGE SCALE GENOMIC DNA]</scope>
    <source>
        <strain>cv. Nipponbare</strain>
    </source>
</reference>
<reference key="2">
    <citation type="journal article" date="2005" name="Nature">
        <title>The map-based sequence of the rice genome.</title>
        <authorList>
            <consortium name="International rice genome sequencing project (IRGSP)"/>
        </authorList>
    </citation>
    <scope>NUCLEOTIDE SEQUENCE [LARGE SCALE GENOMIC DNA]</scope>
    <source>
        <strain>cv. Nipponbare</strain>
    </source>
</reference>
<reference key="3">
    <citation type="journal article" date="2008" name="Nucleic Acids Res.">
        <title>The rice annotation project database (RAP-DB): 2008 update.</title>
        <authorList>
            <consortium name="The rice annotation project (RAP)"/>
        </authorList>
    </citation>
    <scope>GENOME REANNOTATION</scope>
    <source>
        <strain>cv. Nipponbare</strain>
    </source>
</reference>
<reference key="4">
    <citation type="journal article" date="2013" name="Rice">
        <title>Improvement of the Oryza sativa Nipponbare reference genome using next generation sequence and optical map data.</title>
        <authorList>
            <person name="Kawahara Y."/>
            <person name="de la Bastide M."/>
            <person name="Hamilton J.P."/>
            <person name="Kanamori H."/>
            <person name="McCombie W.R."/>
            <person name="Ouyang S."/>
            <person name="Schwartz D.C."/>
            <person name="Tanaka T."/>
            <person name="Wu J."/>
            <person name="Zhou S."/>
            <person name="Childs K.L."/>
            <person name="Davidson R.M."/>
            <person name="Lin H."/>
            <person name="Quesada-Ocampo L."/>
            <person name="Vaillancourt B."/>
            <person name="Sakai H."/>
            <person name="Lee S.S."/>
            <person name="Kim J."/>
            <person name="Numa H."/>
            <person name="Itoh T."/>
            <person name="Buell C.R."/>
            <person name="Matsumoto T."/>
        </authorList>
    </citation>
    <scope>GENOME REANNOTATION</scope>
    <source>
        <strain>cv. Nipponbare</strain>
    </source>
</reference>
<reference key="5">
    <citation type="journal article" date="2003" name="Science">
        <title>Collection, mapping, and annotation of over 28,000 cDNA clones from japonica rice.</title>
        <authorList>
            <consortium name="The rice full-length cDNA consortium"/>
        </authorList>
    </citation>
    <scope>NUCLEOTIDE SEQUENCE [LARGE SCALE MRNA]</scope>
    <source>
        <strain>cv. Nipponbare</strain>
    </source>
</reference>